<organism>
    <name type="scientific">Salmonella newport (strain SL254)</name>
    <dbReference type="NCBI Taxonomy" id="423368"/>
    <lineage>
        <taxon>Bacteria</taxon>
        <taxon>Pseudomonadati</taxon>
        <taxon>Pseudomonadota</taxon>
        <taxon>Gammaproteobacteria</taxon>
        <taxon>Enterobacterales</taxon>
        <taxon>Enterobacteriaceae</taxon>
        <taxon>Salmonella</taxon>
    </lineage>
</organism>
<protein>
    <recommendedName>
        <fullName evidence="1">Glutarate 2-hydroxylase</fullName>
        <shortName evidence="1">G-2-H</shortName>
        <ecNumber evidence="1">1.14.11.64</ecNumber>
    </recommendedName>
</protein>
<sequence length="325" mass="37261">MNALTAVKANTDDLAQRHTGFTLAPSAQSPRLLALTFTADTTRQFLHQVAQWPVQALEYKSFLRFKIGKILDDLCGNQLQPLLIKTLLNRAQGALLISAEGIDDVAQAEEMVKLATAVAHLIGRSNYDAMSGQYYARFVVKNVDNSDSYLRQPHRVMELHNDGTYVEEVTDYVLMMKIDEQNMEGGNSLLLHLDDWEHLESFFTHPLARRVMRWAAPPSKNVSHDVWHPVFDVDQQGRPVMRYIDQFVQPKDFEEGVWLSELSDALETSQNILSVPVPVGKFLLINNLFWLHGRDRFTPHPDLRRELMRQRGYFAYAASHYQTHQ</sequence>
<keyword id="KW-0223">Dioxygenase</keyword>
<keyword id="KW-0408">Iron</keyword>
<keyword id="KW-0479">Metal-binding</keyword>
<keyword id="KW-0560">Oxidoreductase</keyword>
<comment type="function">
    <text evidence="1">Acts as an alpha-ketoglutarate-dependent dioxygenase catalyzing hydroxylation of glutarate (GA) to L-2-hydroxyglutarate (L2HG). Functions in a L-lysine degradation pathway that proceeds via cadaverine, glutarate and L-2-hydroxyglutarate.</text>
</comment>
<comment type="catalytic activity">
    <reaction evidence="1">
        <text>glutarate + 2-oxoglutarate + O2 = (S)-2-hydroxyglutarate + succinate + CO2</text>
        <dbReference type="Rhea" id="RHEA:13821"/>
        <dbReference type="ChEBI" id="CHEBI:15379"/>
        <dbReference type="ChEBI" id="CHEBI:16526"/>
        <dbReference type="ChEBI" id="CHEBI:16782"/>
        <dbReference type="ChEBI" id="CHEBI:16810"/>
        <dbReference type="ChEBI" id="CHEBI:30031"/>
        <dbReference type="ChEBI" id="CHEBI:30921"/>
        <dbReference type="EC" id="1.14.11.64"/>
    </reaction>
    <physiologicalReaction direction="left-to-right" evidence="1">
        <dbReference type="Rhea" id="RHEA:13822"/>
    </physiologicalReaction>
</comment>
<comment type="cofactor">
    <cofactor evidence="1">
        <name>Fe(2+)</name>
        <dbReference type="ChEBI" id="CHEBI:29033"/>
    </cofactor>
    <text evidence="1">Binds 1 Fe(2+) ion per subunit.</text>
</comment>
<comment type="pathway">
    <text evidence="1">Amino-acid degradation.</text>
</comment>
<comment type="subunit">
    <text evidence="1">Homotetramer.</text>
</comment>
<comment type="similarity">
    <text evidence="1">Belongs to the glutarate hydroxylase family.</text>
</comment>
<name>GLAH_SALNS</name>
<evidence type="ECO:0000255" key="1">
    <source>
        <dbReference type="HAMAP-Rule" id="MF_01083"/>
    </source>
</evidence>
<proteinExistence type="inferred from homology"/>
<dbReference type="EC" id="1.14.11.64" evidence="1"/>
<dbReference type="EMBL" id="CP001113">
    <property type="protein sequence ID" value="ACF62841.1"/>
    <property type="molecule type" value="Genomic_DNA"/>
</dbReference>
<dbReference type="RefSeq" id="WP_000993100.1">
    <property type="nucleotide sequence ID" value="NZ_CCMR01000001.1"/>
</dbReference>
<dbReference type="SMR" id="B4T361"/>
<dbReference type="KEGG" id="see:SNSL254_A2986"/>
<dbReference type="HOGENOM" id="CLU_075277_0_0_6"/>
<dbReference type="Proteomes" id="UP000008824">
    <property type="component" value="Chromosome"/>
</dbReference>
<dbReference type="GO" id="GO:0008198">
    <property type="term" value="F:ferrous iron binding"/>
    <property type="evidence" value="ECO:0007669"/>
    <property type="project" value="UniProtKB-UniRule"/>
</dbReference>
<dbReference type="GO" id="GO:0106343">
    <property type="term" value="F:glutarate dioxygenase activity"/>
    <property type="evidence" value="ECO:0007669"/>
    <property type="project" value="UniProtKB-EC"/>
</dbReference>
<dbReference type="GO" id="GO:0050498">
    <property type="term" value="F:oxidoreductase activity, acting on paired donors, with incorporation or reduction of molecular oxygen, with 2-oxoglutarate as one donor, and the other dehydrogenated"/>
    <property type="evidence" value="ECO:0007669"/>
    <property type="project" value="UniProtKB-UniRule"/>
</dbReference>
<dbReference type="GO" id="GO:0019477">
    <property type="term" value="P:L-lysine catabolic process"/>
    <property type="evidence" value="ECO:0007669"/>
    <property type="project" value="UniProtKB-UniRule"/>
</dbReference>
<dbReference type="CDD" id="cd00250">
    <property type="entry name" value="CAS_like"/>
    <property type="match status" value="1"/>
</dbReference>
<dbReference type="FunFam" id="3.60.130.10:FF:000004">
    <property type="entry name" value="Glutarate 2-hydroxylase"/>
    <property type="match status" value="1"/>
</dbReference>
<dbReference type="Gene3D" id="3.60.130.10">
    <property type="entry name" value="Clavaminate synthase-like"/>
    <property type="match status" value="1"/>
</dbReference>
<dbReference type="HAMAP" id="MF_01083">
    <property type="entry name" value="glutarate_hydroxylase"/>
    <property type="match status" value="1"/>
</dbReference>
<dbReference type="InterPro" id="IPR015038">
    <property type="entry name" value="GlaH"/>
</dbReference>
<dbReference type="InterPro" id="IPR042098">
    <property type="entry name" value="TauD-like_sf"/>
</dbReference>
<dbReference type="NCBIfam" id="NF002814">
    <property type="entry name" value="PRK02963.1"/>
    <property type="match status" value="1"/>
</dbReference>
<dbReference type="Pfam" id="PF08943">
    <property type="entry name" value="CsiD"/>
    <property type="match status" value="1"/>
</dbReference>
<dbReference type="SUPFAM" id="SSF51197">
    <property type="entry name" value="Clavaminate synthase-like"/>
    <property type="match status" value="1"/>
</dbReference>
<reference key="1">
    <citation type="journal article" date="2011" name="J. Bacteriol.">
        <title>Comparative genomics of 28 Salmonella enterica isolates: evidence for CRISPR-mediated adaptive sublineage evolution.</title>
        <authorList>
            <person name="Fricke W.F."/>
            <person name="Mammel M.K."/>
            <person name="McDermott P.F."/>
            <person name="Tartera C."/>
            <person name="White D.G."/>
            <person name="Leclerc J.E."/>
            <person name="Ravel J."/>
            <person name="Cebula T.A."/>
        </authorList>
    </citation>
    <scope>NUCLEOTIDE SEQUENCE [LARGE SCALE GENOMIC DNA]</scope>
    <source>
        <strain>SL254</strain>
    </source>
</reference>
<accession>B4T361</accession>
<feature type="chain" id="PRO_1000136872" description="Glutarate 2-hydroxylase">
    <location>
        <begin position="1"/>
        <end position="325"/>
    </location>
</feature>
<feature type="binding site" evidence="1">
    <location>
        <position position="160"/>
    </location>
    <ligand>
        <name>Fe cation</name>
        <dbReference type="ChEBI" id="CHEBI:24875"/>
    </ligand>
</feature>
<feature type="binding site" evidence="1">
    <location>
        <position position="162"/>
    </location>
    <ligand>
        <name>Fe cation</name>
        <dbReference type="ChEBI" id="CHEBI:24875"/>
    </ligand>
</feature>
<feature type="binding site" evidence="1">
    <location>
        <position position="292"/>
    </location>
    <ligand>
        <name>Fe cation</name>
        <dbReference type="ChEBI" id="CHEBI:24875"/>
    </ligand>
</feature>
<gene>
    <name evidence="1" type="primary">glaH</name>
    <name type="ordered locus">SNSL254_A2986</name>
</gene>